<proteinExistence type="inferred from homology"/>
<evidence type="ECO:0000255" key="1">
    <source>
        <dbReference type="HAMAP-Rule" id="MF_00057"/>
    </source>
</evidence>
<keyword id="KW-0963">Cytoplasm</keyword>
<keyword id="KW-0448">Lipopolysaccharide biosynthesis</keyword>
<keyword id="KW-0548">Nucleotidyltransferase</keyword>
<keyword id="KW-0808">Transferase</keyword>
<accession>Q4ZVY8</accession>
<feature type="chain" id="PRO_1000091894" description="3-deoxy-manno-octulosonate cytidylyltransferase">
    <location>
        <begin position="1"/>
        <end position="254"/>
    </location>
</feature>
<dbReference type="EC" id="2.7.7.38" evidence="1"/>
<dbReference type="EMBL" id="CP000075">
    <property type="protein sequence ID" value="AAY36684.1"/>
    <property type="molecule type" value="Genomic_DNA"/>
</dbReference>
<dbReference type="RefSeq" id="WP_003317470.1">
    <property type="nucleotide sequence ID" value="NC_007005.1"/>
</dbReference>
<dbReference type="RefSeq" id="YP_234722.1">
    <property type="nucleotide sequence ID" value="NC_007005.1"/>
</dbReference>
<dbReference type="SMR" id="Q4ZVY8"/>
<dbReference type="STRING" id="205918.Psyr_1636"/>
<dbReference type="GeneID" id="77277469"/>
<dbReference type="KEGG" id="psb:Psyr_1636"/>
<dbReference type="PATRIC" id="fig|205918.7.peg.1673"/>
<dbReference type="eggNOG" id="COG1212">
    <property type="taxonomic scope" value="Bacteria"/>
</dbReference>
<dbReference type="HOGENOM" id="CLU_065038_1_0_6"/>
<dbReference type="OrthoDB" id="9815559at2"/>
<dbReference type="UniPathway" id="UPA00030"/>
<dbReference type="UniPathway" id="UPA00358">
    <property type="reaction ID" value="UER00476"/>
</dbReference>
<dbReference type="Proteomes" id="UP000000426">
    <property type="component" value="Chromosome"/>
</dbReference>
<dbReference type="GO" id="GO:0005829">
    <property type="term" value="C:cytosol"/>
    <property type="evidence" value="ECO:0007669"/>
    <property type="project" value="TreeGrafter"/>
</dbReference>
<dbReference type="GO" id="GO:0008690">
    <property type="term" value="F:3-deoxy-manno-octulosonate cytidylyltransferase activity"/>
    <property type="evidence" value="ECO:0007669"/>
    <property type="project" value="UniProtKB-UniRule"/>
</dbReference>
<dbReference type="GO" id="GO:0033468">
    <property type="term" value="P:CMP-keto-3-deoxy-D-manno-octulosonic acid biosynthetic process"/>
    <property type="evidence" value="ECO:0007669"/>
    <property type="project" value="UniProtKB-UniRule"/>
</dbReference>
<dbReference type="GO" id="GO:0009103">
    <property type="term" value="P:lipopolysaccharide biosynthetic process"/>
    <property type="evidence" value="ECO:0007669"/>
    <property type="project" value="UniProtKB-UniRule"/>
</dbReference>
<dbReference type="CDD" id="cd02517">
    <property type="entry name" value="CMP-KDO-Synthetase"/>
    <property type="match status" value="1"/>
</dbReference>
<dbReference type="FunFam" id="3.90.550.10:FF:000011">
    <property type="entry name" value="3-deoxy-manno-octulosonate cytidylyltransferase"/>
    <property type="match status" value="1"/>
</dbReference>
<dbReference type="Gene3D" id="3.90.550.10">
    <property type="entry name" value="Spore Coat Polysaccharide Biosynthesis Protein SpsA, Chain A"/>
    <property type="match status" value="1"/>
</dbReference>
<dbReference type="HAMAP" id="MF_00057">
    <property type="entry name" value="KdsB"/>
    <property type="match status" value="1"/>
</dbReference>
<dbReference type="InterPro" id="IPR003329">
    <property type="entry name" value="Cytidylyl_trans"/>
</dbReference>
<dbReference type="InterPro" id="IPR004528">
    <property type="entry name" value="KdsB"/>
</dbReference>
<dbReference type="InterPro" id="IPR029044">
    <property type="entry name" value="Nucleotide-diphossugar_trans"/>
</dbReference>
<dbReference type="NCBIfam" id="TIGR00466">
    <property type="entry name" value="kdsB"/>
    <property type="match status" value="1"/>
</dbReference>
<dbReference type="NCBIfam" id="NF003950">
    <property type="entry name" value="PRK05450.1-3"/>
    <property type="match status" value="1"/>
</dbReference>
<dbReference type="NCBIfam" id="NF003952">
    <property type="entry name" value="PRK05450.1-5"/>
    <property type="match status" value="1"/>
</dbReference>
<dbReference type="NCBIfam" id="NF009905">
    <property type="entry name" value="PRK13368.1"/>
    <property type="match status" value="1"/>
</dbReference>
<dbReference type="PANTHER" id="PTHR42866">
    <property type="entry name" value="3-DEOXY-MANNO-OCTULOSONATE CYTIDYLYLTRANSFERASE"/>
    <property type="match status" value="1"/>
</dbReference>
<dbReference type="PANTHER" id="PTHR42866:SF2">
    <property type="entry name" value="3-DEOXY-MANNO-OCTULOSONATE CYTIDYLYLTRANSFERASE, MITOCHONDRIAL"/>
    <property type="match status" value="1"/>
</dbReference>
<dbReference type="Pfam" id="PF02348">
    <property type="entry name" value="CTP_transf_3"/>
    <property type="match status" value="1"/>
</dbReference>
<dbReference type="SUPFAM" id="SSF53448">
    <property type="entry name" value="Nucleotide-diphospho-sugar transferases"/>
    <property type="match status" value="1"/>
</dbReference>
<gene>
    <name evidence="1" type="primary">kdsB</name>
    <name type="ordered locus">Psyr_1636</name>
</gene>
<protein>
    <recommendedName>
        <fullName evidence="1">3-deoxy-manno-octulosonate cytidylyltransferase</fullName>
        <ecNumber evidence="1">2.7.7.38</ecNumber>
    </recommendedName>
    <alternativeName>
        <fullName evidence="1">CMP-2-keto-3-deoxyoctulosonic acid synthase</fullName>
        <shortName evidence="1">CKS</shortName>
        <shortName evidence="1">CMP-KDO synthase</shortName>
    </alternativeName>
</protein>
<comment type="function">
    <text evidence="1">Activates KDO (a required 8-carbon sugar) for incorporation into bacterial lipopolysaccharide in Gram-negative bacteria.</text>
</comment>
<comment type="catalytic activity">
    <reaction evidence="1">
        <text>3-deoxy-alpha-D-manno-oct-2-ulosonate + CTP = CMP-3-deoxy-beta-D-manno-octulosonate + diphosphate</text>
        <dbReference type="Rhea" id="RHEA:23448"/>
        <dbReference type="ChEBI" id="CHEBI:33019"/>
        <dbReference type="ChEBI" id="CHEBI:37563"/>
        <dbReference type="ChEBI" id="CHEBI:85986"/>
        <dbReference type="ChEBI" id="CHEBI:85987"/>
        <dbReference type="EC" id="2.7.7.38"/>
    </reaction>
</comment>
<comment type="pathway">
    <text evidence="1">Nucleotide-sugar biosynthesis; CMP-3-deoxy-D-manno-octulosonate biosynthesis; CMP-3-deoxy-D-manno-octulosonate from 3-deoxy-D-manno-octulosonate and CTP: step 1/1.</text>
</comment>
<comment type="pathway">
    <text evidence="1">Bacterial outer membrane biogenesis; lipopolysaccharide biosynthesis.</text>
</comment>
<comment type="subcellular location">
    <subcellularLocation>
        <location evidence="1">Cytoplasm</location>
    </subcellularLocation>
</comment>
<comment type="similarity">
    <text evidence="1">Belongs to the KdsB family.</text>
</comment>
<reference key="1">
    <citation type="journal article" date="2005" name="Proc. Natl. Acad. Sci. U.S.A.">
        <title>Comparison of the complete genome sequences of Pseudomonas syringae pv. syringae B728a and pv. tomato DC3000.</title>
        <authorList>
            <person name="Feil H."/>
            <person name="Feil W.S."/>
            <person name="Chain P."/>
            <person name="Larimer F."/>
            <person name="Dibartolo G."/>
            <person name="Copeland A."/>
            <person name="Lykidis A."/>
            <person name="Trong S."/>
            <person name="Nolan M."/>
            <person name="Goltsman E."/>
            <person name="Thiel J."/>
            <person name="Malfatti S."/>
            <person name="Loper J.E."/>
            <person name="Lapidus A."/>
            <person name="Detter J.C."/>
            <person name="Land M."/>
            <person name="Richardson P.M."/>
            <person name="Kyrpides N.C."/>
            <person name="Ivanova N."/>
            <person name="Lindow S.E."/>
        </authorList>
    </citation>
    <scope>NUCLEOTIDE SEQUENCE [LARGE SCALE GENOMIC DNA]</scope>
    <source>
        <strain>B728a</strain>
    </source>
</reference>
<organism>
    <name type="scientific">Pseudomonas syringae pv. syringae (strain B728a)</name>
    <dbReference type="NCBI Taxonomy" id="205918"/>
    <lineage>
        <taxon>Bacteria</taxon>
        <taxon>Pseudomonadati</taxon>
        <taxon>Pseudomonadota</taxon>
        <taxon>Gammaproteobacteria</taxon>
        <taxon>Pseudomonadales</taxon>
        <taxon>Pseudomonadaceae</taxon>
        <taxon>Pseudomonas</taxon>
        <taxon>Pseudomonas syringae</taxon>
    </lineage>
</organism>
<sequence>MTAAFTVVIPARYGSSRFPGKPLKTIAGKPMVQLVWEQACKSSAERVVIATDDARIVEACQAFGAEVLLTRDDHNSGTDRLAEVAAQLGLAADAIVVNVQGDEPMIPPAVIDQVASNLAAHPEAGMSTLAEPIDDVAALFNPNIVKVATDINGLALTFSRAPLPWARDALAANRDQLPAGVPYRRHIGIYAYRAGFLHDFVSWGPCWLENTESLEQLRALWNGVRIHVADALEAPPGGVDTPEDLERVRRLLEG</sequence>
<name>KDSB_PSEU2</name>